<sequence>MLFKSLQSITSVNSIQKNQISSISVGSSQANNNAALLDAAALVVIPGLLTAAAVAHI</sequence>
<dbReference type="EMBL" id="AAFI02000055">
    <property type="protein sequence ID" value="EAL65738.1"/>
    <property type="molecule type" value="Genomic_DNA"/>
</dbReference>
<dbReference type="RefSeq" id="XP_639057.1">
    <property type="nucleotide sequence ID" value="XM_633965.1"/>
</dbReference>
<dbReference type="FunCoup" id="Q54R34">
    <property type="interactions" value="640"/>
</dbReference>
<dbReference type="PaxDb" id="44689-DDB0229998"/>
<dbReference type="EnsemblProtists" id="EAL65738">
    <property type="protein sequence ID" value="EAL65738"/>
    <property type="gene ID" value="DDB_G0283507"/>
</dbReference>
<dbReference type="GeneID" id="8624082"/>
<dbReference type="KEGG" id="ddi:DDB_G0283507"/>
<dbReference type="dictyBase" id="DDB_G0283507"/>
<dbReference type="HOGENOM" id="CLU_210588_0_0_1"/>
<dbReference type="InParanoid" id="Q54R34"/>
<dbReference type="PRO" id="PR:Q54R34"/>
<dbReference type="Proteomes" id="UP000002195">
    <property type="component" value="Chromosome 4"/>
</dbReference>
<dbReference type="GO" id="GO:0016020">
    <property type="term" value="C:membrane"/>
    <property type="evidence" value="ECO:0007669"/>
    <property type="project" value="UniProtKB-SubCell"/>
</dbReference>
<reference key="1">
    <citation type="journal article" date="2005" name="Nature">
        <title>The genome of the social amoeba Dictyostelium discoideum.</title>
        <authorList>
            <person name="Eichinger L."/>
            <person name="Pachebat J.A."/>
            <person name="Gloeckner G."/>
            <person name="Rajandream M.A."/>
            <person name="Sucgang R."/>
            <person name="Berriman M."/>
            <person name="Song J."/>
            <person name="Olsen R."/>
            <person name="Szafranski K."/>
            <person name="Xu Q."/>
            <person name="Tunggal B."/>
            <person name="Kummerfeld S."/>
            <person name="Madera M."/>
            <person name="Konfortov B.A."/>
            <person name="Rivero F."/>
            <person name="Bankier A.T."/>
            <person name="Lehmann R."/>
            <person name="Hamlin N."/>
            <person name="Davies R."/>
            <person name="Gaudet P."/>
            <person name="Fey P."/>
            <person name="Pilcher K."/>
            <person name="Chen G."/>
            <person name="Saunders D."/>
            <person name="Sodergren E.J."/>
            <person name="Davis P."/>
            <person name="Kerhornou A."/>
            <person name="Nie X."/>
            <person name="Hall N."/>
            <person name="Anjard C."/>
            <person name="Hemphill L."/>
            <person name="Bason N."/>
            <person name="Farbrother P."/>
            <person name="Desany B."/>
            <person name="Just E."/>
            <person name="Morio T."/>
            <person name="Rost R."/>
            <person name="Churcher C.M."/>
            <person name="Cooper J."/>
            <person name="Haydock S."/>
            <person name="van Driessche N."/>
            <person name="Cronin A."/>
            <person name="Goodhead I."/>
            <person name="Muzny D.M."/>
            <person name="Mourier T."/>
            <person name="Pain A."/>
            <person name="Lu M."/>
            <person name="Harper D."/>
            <person name="Lindsay R."/>
            <person name="Hauser H."/>
            <person name="James K.D."/>
            <person name="Quiles M."/>
            <person name="Madan Babu M."/>
            <person name="Saito T."/>
            <person name="Buchrieser C."/>
            <person name="Wardroper A."/>
            <person name="Felder M."/>
            <person name="Thangavelu M."/>
            <person name="Johnson D."/>
            <person name="Knights A."/>
            <person name="Loulseged H."/>
            <person name="Mungall K.L."/>
            <person name="Oliver K."/>
            <person name="Price C."/>
            <person name="Quail M.A."/>
            <person name="Urushihara H."/>
            <person name="Hernandez J."/>
            <person name="Rabbinowitsch E."/>
            <person name="Steffen D."/>
            <person name="Sanders M."/>
            <person name="Ma J."/>
            <person name="Kohara Y."/>
            <person name="Sharp S."/>
            <person name="Simmonds M.N."/>
            <person name="Spiegler S."/>
            <person name="Tivey A."/>
            <person name="Sugano S."/>
            <person name="White B."/>
            <person name="Walker D."/>
            <person name="Woodward J.R."/>
            <person name="Winckler T."/>
            <person name="Tanaka Y."/>
            <person name="Shaulsky G."/>
            <person name="Schleicher M."/>
            <person name="Weinstock G.M."/>
            <person name="Rosenthal A."/>
            <person name="Cox E.C."/>
            <person name="Chisholm R.L."/>
            <person name="Gibbs R.A."/>
            <person name="Loomis W.F."/>
            <person name="Platzer M."/>
            <person name="Kay R.R."/>
            <person name="Williams J.G."/>
            <person name="Dear P.H."/>
            <person name="Noegel A.A."/>
            <person name="Barrell B.G."/>
            <person name="Kuspa A."/>
        </authorList>
    </citation>
    <scope>NUCLEOTIDE SEQUENCE [LARGE SCALE GENOMIC DNA]</scope>
    <source>
        <strain>AX4</strain>
    </source>
</reference>
<reference key="2">
    <citation type="journal article" date="2003" name="Eukaryot. Cell">
        <title>Changing patterns of gene expression in Dictyostelium prestalk cell subtypes recognized by in situ hybridization with genes from microarray analyses.</title>
        <authorList>
            <person name="Maeda M."/>
            <person name="Sakamoto H."/>
            <person name="Iranfar N."/>
            <person name="Fuller D."/>
            <person name="Maruo T."/>
            <person name="Ogihara S."/>
            <person name="Morio T."/>
            <person name="Urushihara H."/>
            <person name="Tanaka Y."/>
            <person name="Loomis W.F."/>
        </authorList>
    </citation>
    <scope>DEVELOPMENTAL STAGE [LARGE SCALE ANALYSIS]</scope>
</reference>
<reference key="3">
    <citation type="journal article" date="2004" name="Eukaryot. Cell">
        <title>Control of cell type proportioning in Dictyostelium discoideum by differentiation-inducing factor as determined by in situ hybridization.</title>
        <authorList>
            <person name="Maruo T."/>
            <person name="Sakamoto H."/>
            <person name="Iranfar N."/>
            <person name="Fuller D."/>
            <person name="Morio T."/>
            <person name="Urushihara H."/>
            <person name="Tanaka Y."/>
            <person name="Maeda M."/>
            <person name="Loomis W.F."/>
        </authorList>
    </citation>
    <scope>DEVELOPMENTAL STAGE [LARGE SCALE ANALYSIS]</scope>
</reference>
<reference key="4">
    <citation type="journal article" date="2004" name="Int. J. Dev. Biol.">
        <title>Identification of new modes of Dd-STATa regulation of gene expression in Dictyostelium by in situ hybridisation.</title>
        <authorList>
            <person name="Shimada N."/>
            <person name="Maeda M."/>
            <person name="Urushihara H."/>
            <person name="Kawata T."/>
        </authorList>
    </citation>
    <scope>IDENTIFICATION</scope>
</reference>
<reference key="5">
    <citation type="journal article" date="2006" name="Dev. Biol.">
        <title>Transcriptional regulation of post-aggregation genes in Dictyostelium by a feed-forward loop involving GBF and LagC.</title>
        <authorList>
            <person name="Iranfar N."/>
            <person name="Fuller D."/>
            <person name="Loomis W.F."/>
        </authorList>
    </citation>
    <scope>DEVELOPMENTAL STAGE [LARGE SCALE ANALYSIS]</scope>
</reference>
<gene>
    <name type="ORF">DDB_G0283507</name>
</gene>
<evidence type="ECO:0000255" key="1"/>
<evidence type="ECO:0000269" key="2">
    <source>
    </source>
</evidence>
<evidence type="ECO:0000269" key="3">
    <source>
    </source>
</evidence>
<evidence type="ECO:0000269" key="4">
    <source>
    </source>
</evidence>
<evidence type="ECO:0000305" key="5"/>
<organism>
    <name type="scientific">Dictyostelium discoideum</name>
    <name type="common">Social amoeba</name>
    <dbReference type="NCBI Taxonomy" id="44689"/>
    <lineage>
        <taxon>Eukaryota</taxon>
        <taxon>Amoebozoa</taxon>
        <taxon>Evosea</taxon>
        <taxon>Eumycetozoa</taxon>
        <taxon>Dictyostelia</taxon>
        <taxon>Dictyosteliales</taxon>
        <taxon>Dictyosteliaceae</taxon>
        <taxon>Dictyostelium</taxon>
    </lineage>
</organism>
<accession>Q54R34</accession>
<keyword id="KW-0472">Membrane</keyword>
<keyword id="KW-1185">Reference proteome</keyword>
<keyword id="KW-0812">Transmembrane</keyword>
<keyword id="KW-1133">Transmembrane helix</keyword>
<comment type="subcellular location">
    <subcellularLocation>
        <location evidence="5">Membrane</location>
        <topology evidence="5">Single-pass membrane protein</topology>
    </subcellularLocation>
</comment>
<comment type="developmental stage">
    <text evidence="2 3 4">Expressed in prestalk pstA and pstO cells in the slug stage. Preferentially restricted to pstO cells during culmination. Expression in the prestalk cells is reduced in dmtA-null cells. Expression is gbfA-dependent.</text>
</comment>
<name>Y3507_DICDI</name>
<protein>
    <recommendedName>
        <fullName>Uncharacterized protein DDB_G0283507</fullName>
    </recommendedName>
</protein>
<proteinExistence type="evidence at transcript level"/>
<feature type="chain" id="PRO_0000392661" description="Uncharacterized protein DDB_G0283507">
    <location>
        <begin position="1"/>
        <end position="57"/>
    </location>
</feature>
<feature type="transmembrane region" description="Helical" evidence="1">
    <location>
        <begin position="34"/>
        <end position="54"/>
    </location>
</feature>